<keyword id="KW-0963">Cytoplasm</keyword>
<keyword id="KW-0448">Lipopolysaccharide biosynthesis</keyword>
<keyword id="KW-1185">Reference proteome</keyword>
<keyword id="KW-0808">Transferase</keyword>
<dbReference type="EC" id="2.5.1.55" evidence="1"/>
<dbReference type="EMBL" id="CP001321">
    <property type="protein sequence ID" value="ACL32423.1"/>
    <property type="molecule type" value="Genomic_DNA"/>
</dbReference>
<dbReference type="RefSeq" id="WP_012621911.1">
    <property type="nucleotide sequence ID" value="NC_011852.1"/>
</dbReference>
<dbReference type="SMR" id="B8F521"/>
<dbReference type="STRING" id="557723.HAPS_0787"/>
<dbReference type="KEGG" id="hap:HAPS_0787"/>
<dbReference type="PATRIC" id="fig|557723.8.peg.786"/>
<dbReference type="HOGENOM" id="CLU_036666_0_0_6"/>
<dbReference type="UniPathway" id="UPA00030"/>
<dbReference type="UniPathway" id="UPA00357">
    <property type="reaction ID" value="UER00474"/>
</dbReference>
<dbReference type="Proteomes" id="UP000006743">
    <property type="component" value="Chromosome"/>
</dbReference>
<dbReference type="GO" id="GO:0005737">
    <property type="term" value="C:cytoplasm"/>
    <property type="evidence" value="ECO:0007669"/>
    <property type="project" value="UniProtKB-SubCell"/>
</dbReference>
<dbReference type="GO" id="GO:0008676">
    <property type="term" value="F:3-deoxy-8-phosphooctulonate synthase activity"/>
    <property type="evidence" value="ECO:0007669"/>
    <property type="project" value="UniProtKB-UniRule"/>
</dbReference>
<dbReference type="GO" id="GO:0019294">
    <property type="term" value="P:keto-3-deoxy-D-manno-octulosonic acid biosynthetic process"/>
    <property type="evidence" value="ECO:0007669"/>
    <property type="project" value="UniProtKB-UniRule"/>
</dbReference>
<dbReference type="FunFam" id="3.20.20.70:FF:000058">
    <property type="entry name" value="2-dehydro-3-deoxyphosphooctonate aldolase"/>
    <property type="match status" value="1"/>
</dbReference>
<dbReference type="Gene3D" id="3.20.20.70">
    <property type="entry name" value="Aldolase class I"/>
    <property type="match status" value="1"/>
</dbReference>
<dbReference type="HAMAP" id="MF_00056">
    <property type="entry name" value="KDO8P_synth"/>
    <property type="match status" value="1"/>
</dbReference>
<dbReference type="InterPro" id="IPR013785">
    <property type="entry name" value="Aldolase_TIM"/>
</dbReference>
<dbReference type="InterPro" id="IPR006218">
    <property type="entry name" value="DAHP1/KDSA"/>
</dbReference>
<dbReference type="InterPro" id="IPR006269">
    <property type="entry name" value="KDO8P_synthase"/>
</dbReference>
<dbReference type="NCBIfam" id="TIGR01362">
    <property type="entry name" value="KDO8P_synth"/>
    <property type="match status" value="1"/>
</dbReference>
<dbReference type="NCBIfam" id="NF003543">
    <property type="entry name" value="PRK05198.1"/>
    <property type="match status" value="1"/>
</dbReference>
<dbReference type="NCBIfam" id="NF009109">
    <property type="entry name" value="PRK12457.1"/>
    <property type="match status" value="1"/>
</dbReference>
<dbReference type="PANTHER" id="PTHR21057">
    <property type="entry name" value="PHOSPHO-2-DEHYDRO-3-DEOXYHEPTONATE ALDOLASE"/>
    <property type="match status" value="1"/>
</dbReference>
<dbReference type="Pfam" id="PF00793">
    <property type="entry name" value="DAHP_synth_1"/>
    <property type="match status" value="1"/>
</dbReference>
<dbReference type="SUPFAM" id="SSF51569">
    <property type="entry name" value="Aldolase"/>
    <property type="match status" value="1"/>
</dbReference>
<feature type="chain" id="PRO_1000117785" description="2-dehydro-3-deoxyphosphooctonate aldolase">
    <location>
        <begin position="1"/>
        <end position="284"/>
    </location>
</feature>
<reference key="1">
    <citation type="journal article" date="2009" name="J. Bacteriol.">
        <title>Complete genome sequence of Haemophilus parasuis SH0165.</title>
        <authorList>
            <person name="Yue M."/>
            <person name="Yang F."/>
            <person name="Yang J."/>
            <person name="Bei W."/>
            <person name="Cai X."/>
            <person name="Chen L."/>
            <person name="Dong J."/>
            <person name="Zhou R."/>
            <person name="Jin M."/>
            <person name="Jin Q."/>
            <person name="Chen H."/>
        </authorList>
    </citation>
    <scope>NUCLEOTIDE SEQUENCE [LARGE SCALE GENOMIC DNA]</scope>
    <source>
        <strain>SH0165</strain>
    </source>
</reference>
<comment type="catalytic activity">
    <reaction evidence="1">
        <text>D-arabinose 5-phosphate + phosphoenolpyruvate + H2O = 3-deoxy-alpha-D-manno-2-octulosonate-8-phosphate + phosphate</text>
        <dbReference type="Rhea" id="RHEA:14053"/>
        <dbReference type="ChEBI" id="CHEBI:15377"/>
        <dbReference type="ChEBI" id="CHEBI:43474"/>
        <dbReference type="ChEBI" id="CHEBI:57693"/>
        <dbReference type="ChEBI" id="CHEBI:58702"/>
        <dbReference type="ChEBI" id="CHEBI:85985"/>
        <dbReference type="EC" id="2.5.1.55"/>
    </reaction>
</comment>
<comment type="pathway">
    <text evidence="1">Carbohydrate biosynthesis; 3-deoxy-D-manno-octulosonate biosynthesis; 3-deoxy-D-manno-octulosonate from D-ribulose 5-phosphate: step 2/3.</text>
</comment>
<comment type="pathway">
    <text evidence="1">Bacterial outer membrane biogenesis; lipopolysaccharide biosynthesis.</text>
</comment>
<comment type="subcellular location">
    <subcellularLocation>
        <location evidence="1">Cytoplasm</location>
    </subcellularLocation>
</comment>
<comment type="similarity">
    <text evidence="1">Belongs to the KdsA family.</text>
</comment>
<accession>B8F521</accession>
<proteinExistence type="inferred from homology"/>
<protein>
    <recommendedName>
        <fullName evidence="1">2-dehydro-3-deoxyphosphooctonate aldolase</fullName>
        <ecNumber evidence="1">2.5.1.55</ecNumber>
    </recommendedName>
    <alternativeName>
        <fullName evidence="1">3-deoxy-D-manno-octulosonic acid 8-phosphate synthase</fullName>
    </alternativeName>
    <alternativeName>
        <fullName evidence="1">KDO-8-phosphate synthase</fullName>
        <shortName evidence="1">KDO 8-P synthase</shortName>
        <shortName evidence="1">KDOPS</shortName>
    </alternativeName>
    <alternativeName>
        <fullName evidence="1">Phospho-2-dehydro-3-deoxyoctonate aldolase</fullName>
    </alternativeName>
</protein>
<name>KDSA_GLAP5</name>
<evidence type="ECO:0000255" key="1">
    <source>
        <dbReference type="HAMAP-Rule" id="MF_00056"/>
    </source>
</evidence>
<organism>
    <name type="scientific">Glaesserella parasuis serovar 5 (strain SH0165)</name>
    <name type="common">Haemophilus parasuis</name>
    <dbReference type="NCBI Taxonomy" id="557723"/>
    <lineage>
        <taxon>Bacteria</taxon>
        <taxon>Pseudomonadati</taxon>
        <taxon>Pseudomonadota</taxon>
        <taxon>Gammaproteobacteria</taxon>
        <taxon>Pasteurellales</taxon>
        <taxon>Pasteurellaceae</taxon>
        <taxon>Glaesserella</taxon>
    </lineage>
</organism>
<sequence>MQQKTISLGNIDIANDKPFVLFGGMNVLESRDMAMQVCEKYVEVTQRLGVPYVFKASFDKANRSSIHSYRGPGMEEGLKIFQELKDTFGVKIITDVHEIYQCQPVAEVVDIIQLPAFLARQTDLVEAMARTGAVINVKKPQFLSPGQMGNIVEKIEECGNDKVILCDRGTNFGYDNLVVDMLGFNVMKKVSKGCPVIFDVTHSLQCRDPFGAASGGRRDQVTKLARAGMAIGLAGLFLEAHPDPNKAKCDGPSALPLSKLEAFVSQMKAIDDLVKSFEEIDTSN</sequence>
<gene>
    <name evidence="1" type="primary">kdsA</name>
    <name type="ordered locus">HAPS_0787</name>
</gene>